<proteinExistence type="predicted"/>
<sequence length="122" mass="13850">MGEMLERQKKRLPSKAKYLKYTASITETGNHEADSSVIFRPHHSDVTCSNARRAESRTLPQICSCILLDHGRRTRPEVRTGMVSLHGSFKGFPCFGIRRGISHVLPGQKLRGSCDNWKKRQN</sequence>
<keyword id="KW-1185">Reference proteome</keyword>
<gene>
    <name type="ordered locus">YBL044W</name>
    <name type="ORF">YBL0404</name>
</gene>
<protein>
    <recommendedName>
        <fullName>Uncharacterized protein YBL044W</fullName>
    </recommendedName>
</protein>
<name>YBE4_YEAST</name>
<dbReference type="EMBL" id="X78214">
    <property type="protein sequence ID" value="CAA55051.1"/>
    <property type="molecule type" value="Genomic_DNA"/>
</dbReference>
<dbReference type="EMBL" id="Z35805">
    <property type="protein sequence ID" value="CAA84864.1"/>
    <property type="molecule type" value="Genomic_DNA"/>
</dbReference>
<dbReference type="EMBL" id="BK006936">
    <property type="protein sequence ID" value="DAA07074.1"/>
    <property type="molecule type" value="Genomic_DNA"/>
</dbReference>
<dbReference type="PIR" id="S50287">
    <property type="entry name" value="S50287"/>
</dbReference>
<dbReference type="RefSeq" id="NP_009509.1">
    <property type="nucleotide sequence ID" value="NM_001178284.1"/>
</dbReference>
<dbReference type="BioGRID" id="32653">
    <property type="interactions" value="21"/>
</dbReference>
<dbReference type="DIP" id="DIP-2034N"/>
<dbReference type="FunCoup" id="P38194">
    <property type="interactions" value="123"/>
</dbReference>
<dbReference type="IntAct" id="P38194">
    <property type="interactions" value="3"/>
</dbReference>
<dbReference type="MINT" id="P38194"/>
<dbReference type="STRING" id="4932.YBL044W"/>
<dbReference type="PaxDb" id="4932-YBL044W"/>
<dbReference type="EnsemblFungi" id="YBL044W_mRNA">
    <property type="protein sequence ID" value="YBL044W"/>
    <property type="gene ID" value="YBL044W"/>
</dbReference>
<dbReference type="GeneID" id="852236"/>
<dbReference type="KEGG" id="sce:YBL044W"/>
<dbReference type="AGR" id="SGD:S000000140"/>
<dbReference type="SGD" id="S000000140">
    <property type="gene designation" value="YBL044W"/>
</dbReference>
<dbReference type="VEuPathDB" id="FungiDB:YBL044W"/>
<dbReference type="HOGENOM" id="CLU_2028536_0_0_1"/>
<dbReference type="InParanoid" id="P38194"/>
<dbReference type="OrthoDB" id="10440322at2759"/>
<dbReference type="BioCyc" id="YEAST:G3O-28945-MONOMER"/>
<dbReference type="BioGRID-ORCS" id="852236">
    <property type="hits" value="8 hits in 10 CRISPR screens"/>
</dbReference>
<dbReference type="PRO" id="PR:P38194"/>
<dbReference type="Proteomes" id="UP000002311">
    <property type="component" value="Chromosome II"/>
</dbReference>
<dbReference type="RNAct" id="P38194">
    <property type="molecule type" value="protein"/>
</dbReference>
<accession>P38194</accession>
<accession>D6VPV4</accession>
<reference key="1">
    <citation type="journal article" date="1994" name="Yeast">
        <title>The sequence of a 22.4 kb DNA fragment from the left arm of yeast chromosome II reveals homologues to bacterial proline synthetase and murine alpha-adaptin, as well as a new permease and a DNA-binding protein.</title>
        <authorList>
            <person name="de Wergifosse P."/>
            <person name="Jacques B."/>
            <person name="Jonniaux J.-L."/>
            <person name="Purnelle B."/>
            <person name="Skala J."/>
            <person name="Goffeau A."/>
        </authorList>
    </citation>
    <scope>NUCLEOTIDE SEQUENCE [GENOMIC DNA]</scope>
    <source>
        <strain>ATCC 204508 / S288c</strain>
    </source>
</reference>
<reference key="2">
    <citation type="journal article" date="1994" name="EMBO J.">
        <title>Complete DNA sequence of yeast chromosome II.</title>
        <authorList>
            <person name="Feldmann H."/>
            <person name="Aigle M."/>
            <person name="Aljinovic G."/>
            <person name="Andre B."/>
            <person name="Baclet M.C."/>
            <person name="Barthe C."/>
            <person name="Baur A."/>
            <person name="Becam A.-M."/>
            <person name="Biteau N."/>
            <person name="Boles E."/>
            <person name="Brandt T."/>
            <person name="Brendel M."/>
            <person name="Brueckner M."/>
            <person name="Bussereau F."/>
            <person name="Christiansen C."/>
            <person name="Contreras R."/>
            <person name="Crouzet M."/>
            <person name="Cziepluch C."/>
            <person name="Demolis N."/>
            <person name="Delaveau T."/>
            <person name="Doignon F."/>
            <person name="Domdey H."/>
            <person name="Duesterhus S."/>
            <person name="Dubois E."/>
            <person name="Dujon B."/>
            <person name="El Bakkoury M."/>
            <person name="Entian K.-D."/>
            <person name="Feuermann M."/>
            <person name="Fiers W."/>
            <person name="Fobo G.M."/>
            <person name="Fritz C."/>
            <person name="Gassenhuber J."/>
            <person name="Glansdorff N."/>
            <person name="Goffeau A."/>
            <person name="Grivell L.A."/>
            <person name="de Haan M."/>
            <person name="Hein C."/>
            <person name="Herbert C.J."/>
            <person name="Hollenberg C.P."/>
            <person name="Holmstroem K."/>
            <person name="Jacq C."/>
            <person name="Jacquet M."/>
            <person name="Jauniaux J.-C."/>
            <person name="Jonniaux J.-L."/>
            <person name="Kallesoee T."/>
            <person name="Kiesau P."/>
            <person name="Kirchrath L."/>
            <person name="Koetter P."/>
            <person name="Korol S."/>
            <person name="Liebl S."/>
            <person name="Logghe M."/>
            <person name="Lohan A.J.E."/>
            <person name="Louis E.J."/>
            <person name="Li Z.Y."/>
            <person name="Maat M.J."/>
            <person name="Mallet L."/>
            <person name="Mannhaupt G."/>
            <person name="Messenguy F."/>
            <person name="Miosga T."/>
            <person name="Molemans F."/>
            <person name="Mueller S."/>
            <person name="Nasr F."/>
            <person name="Obermaier B."/>
            <person name="Perea J."/>
            <person name="Pierard A."/>
            <person name="Piravandi E."/>
            <person name="Pohl F.M."/>
            <person name="Pohl T.M."/>
            <person name="Potier S."/>
            <person name="Proft M."/>
            <person name="Purnelle B."/>
            <person name="Ramezani Rad M."/>
            <person name="Rieger M."/>
            <person name="Rose M."/>
            <person name="Schaaff-Gerstenschlaeger I."/>
            <person name="Scherens B."/>
            <person name="Schwarzlose C."/>
            <person name="Skala J."/>
            <person name="Slonimski P.P."/>
            <person name="Smits P.H.M."/>
            <person name="Souciet J.-L."/>
            <person name="Steensma H.Y."/>
            <person name="Stucka R."/>
            <person name="Urrestarazu L.A."/>
            <person name="van der Aart Q.J.M."/>
            <person name="Van Dyck L."/>
            <person name="Vassarotti A."/>
            <person name="Vetter I."/>
            <person name="Vierendeels F."/>
            <person name="Vissers S."/>
            <person name="Wagner G."/>
            <person name="de Wergifosse P."/>
            <person name="Wolfe K.H."/>
            <person name="Zagulski M."/>
            <person name="Zimmermann F.K."/>
            <person name="Mewes H.-W."/>
            <person name="Kleine K."/>
        </authorList>
    </citation>
    <scope>NUCLEOTIDE SEQUENCE [LARGE SCALE GENOMIC DNA]</scope>
    <source>
        <strain>ATCC 204508 / S288c</strain>
    </source>
</reference>
<reference key="3">
    <citation type="journal article" date="2014" name="G3 (Bethesda)">
        <title>The reference genome sequence of Saccharomyces cerevisiae: Then and now.</title>
        <authorList>
            <person name="Engel S.R."/>
            <person name="Dietrich F.S."/>
            <person name="Fisk D.G."/>
            <person name="Binkley G."/>
            <person name="Balakrishnan R."/>
            <person name="Costanzo M.C."/>
            <person name="Dwight S.S."/>
            <person name="Hitz B.C."/>
            <person name="Karra K."/>
            <person name="Nash R.S."/>
            <person name="Weng S."/>
            <person name="Wong E.D."/>
            <person name="Lloyd P."/>
            <person name="Skrzypek M.S."/>
            <person name="Miyasato S.R."/>
            <person name="Simison M."/>
            <person name="Cherry J.M."/>
        </authorList>
    </citation>
    <scope>GENOME REANNOTATION</scope>
    <source>
        <strain>ATCC 204508 / S288c</strain>
    </source>
</reference>
<feature type="chain" id="PRO_0000202459" description="Uncharacterized protein YBL044W">
    <location>
        <begin position="1"/>
        <end position="122"/>
    </location>
</feature>
<organism>
    <name type="scientific">Saccharomyces cerevisiae (strain ATCC 204508 / S288c)</name>
    <name type="common">Baker's yeast</name>
    <dbReference type="NCBI Taxonomy" id="559292"/>
    <lineage>
        <taxon>Eukaryota</taxon>
        <taxon>Fungi</taxon>
        <taxon>Dikarya</taxon>
        <taxon>Ascomycota</taxon>
        <taxon>Saccharomycotina</taxon>
        <taxon>Saccharomycetes</taxon>
        <taxon>Saccharomycetales</taxon>
        <taxon>Saccharomycetaceae</taxon>
        <taxon>Saccharomyces</taxon>
    </lineage>
</organism>